<evidence type="ECO:0000250" key="1"/>
<evidence type="ECO:0000250" key="2">
    <source>
        <dbReference type="UniProtKB" id="P13706"/>
    </source>
</evidence>
<evidence type="ECO:0000269" key="3">
    <source ref="3"/>
</evidence>
<evidence type="ECO:0000305" key="4"/>
<reference key="1">
    <citation type="journal article" date="1992" name="Life Sci. Adv. (Genet.)">
        <title>Temperature-dependency differencies in GPDH allozmyes associated with a single base change in the coding region of the GPDH structural gene in Drosophila virilis.</title>
        <authorList>
            <person name="Narise S."/>
            <person name="Tominaga H."/>
        </authorList>
    </citation>
    <scope>NUCLEOTIDE SEQUENCE [MRNA]</scope>
</reference>
<reference key="2">
    <citation type="journal article" date="1992" name="Biochim. Biophys. Acta">
        <title>Structure of Drosophila virilis glycerol-3-phosphate dehydrogenase gene and a comparison with the Drosophila melanogaster gene.</title>
        <authorList>
            <person name="Tominaga H."/>
            <person name="Shiba T."/>
            <person name="Narise S."/>
        </authorList>
    </citation>
    <scope>NUCLEOTIDE SEQUENCE [GENOMIC DNA]</scope>
</reference>
<reference key="3">
    <citation type="journal article" date="1988" name="Biochim. Biophys. Acta">
        <title>The complete amino-acid sequence of cytoplasmic glycerol-3-phosphate dehydrogenase from Drosophila virilis.</title>
        <authorList>
            <person name="Arai K."/>
            <person name="Tominaga H."/>
            <person name="Yokote Y."/>
            <person name="Narise S."/>
        </authorList>
    </citation>
    <scope>PROTEIN SEQUENCE OF 2-353</scope>
</reference>
<name>GPDA_DROVI</name>
<proteinExistence type="evidence at protein level"/>
<feature type="initiator methionine" description="Removed" evidence="3">
    <location>
        <position position="1"/>
    </location>
</feature>
<feature type="chain" id="PRO_0000138077" description="Glycerol-3-phosphate dehydrogenase [NAD(+)], cytoplasmic">
    <location>
        <begin position="2"/>
        <end position="353"/>
    </location>
</feature>
<feature type="active site" description="Proton acceptor" evidence="1">
    <location>
        <position position="206"/>
    </location>
</feature>
<feature type="binding site" evidence="1">
    <location>
        <begin position="11"/>
        <end position="16"/>
    </location>
    <ligand>
        <name>NAD(+)</name>
        <dbReference type="ChEBI" id="CHEBI:57540"/>
    </ligand>
</feature>
<feature type="binding site" evidence="1">
    <location>
        <position position="98"/>
    </location>
    <ligand>
        <name>NAD(+)</name>
        <dbReference type="ChEBI" id="CHEBI:57540"/>
    </ligand>
</feature>
<feature type="binding site" evidence="1">
    <location>
        <position position="121"/>
    </location>
    <ligand>
        <name>NAD(+)</name>
        <dbReference type="ChEBI" id="CHEBI:57540"/>
    </ligand>
</feature>
<feature type="binding site" evidence="1">
    <location>
        <position position="121"/>
    </location>
    <ligand>
        <name>substrate</name>
    </ligand>
</feature>
<feature type="binding site" evidence="1">
    <location>
        <position position="155"/>
    </location>
    <ligand>
        <name>NAD(+)</name>
        <dbReference type="ChEBI" id="CHEBI:57540"/>
    </ligand>
</feature>
<feature type="binding site" evidence="1">
    <location>
        <begin position="270"/>
        <end position="271"/>
    </location>
    <ligand>
        <name>substrate</name>
    </ligand>
</feature>
<feature type="binding site" evidence="1">
    <location>
        <position position="270"/>
    </location>
    <ligand>
        <name>NAD(+)</name>
        <dbReference type="ChEBI" id="CHEBI:57540"/>
    </ligand>
</feature>
<feature type="binding site" evidence="1">
    <location>
        <position position="299"/>
    </location>
    <ligand>
        <name>NAD(+)</name>
        <dbReference type="ChEBI" id="CHEBI:57540"/>
    </ligand>
</feature>
<feature type="modified residue" description="Blocked amino end (Ala)">
    <location>
        <position position="2"/>
    </location>
</feature>
<feature type="sequence conflict" description="In Ref. 3; AA sequence." evidence="4" ref="3">
    <original>W</original>
    <variation>N</variation>
    <location>
        <position position="15"/>
    </location>
</feature>
<feature type="sequence conflict" description="In Ref. 1; CAA41800." evidence="4" ref="1">
    <original>E</original>
    <variation>K</variation>
    <location>
        <position position="35"/>
    </location>
</feature>
<protein>
    <recommendedName>
        <fullName>Glycerol-3-phosphate dehydrogenase [NAD(+)], cytoplasmic</fullName>
        <shortName>GPD-C</shortName>
        <shortName>GPDH-C</shortName>
        <ecNumber>1.1.1.8</ecNumber>
    </recommendedName>
</protein>
<gene>
    <name evidence="2" type="primary">Gpdh1</name>
    <name evidence="2" type="synonym">Gpdh</name>
</gene>
<accession>P07735</accession>
<accession>Q27634</accession>
<keyword id="KW-0963">Cytoplasm</keyword>
<keyword id="KW-0903">Direct protein sequencing</keyword>
<keyword id="KW-0520">NAD</keyword>
<keyword id="KW-0560">Oxidoreductase</keyword>
<sequence length="353" mass="38651">MAEKVNVCIVGSGNWGSAIAKIVGANAAALPEFEERVTMFVYEEMIDGKKLTEIINETHENVKYLKGHKLPTNVVAVPDLVEAAKNADILIFVVPHQFIPNFCKQLLGKIKPNAIAISLIKGFDKAEGGGIDLISHIITRHLKIPCAVLMGANLANEVAEGNFCETTIGCTDKKYGKVLRDLFQANHFRVVVVEDADAVEVCGALKNIVACGAGFVDGLKLGDNTKAAVIRLGLMEMIRFVDVFYPGSKLSTFFESCGVADLITTCYGGRNRRVSEAFVTSGKTIEDLEKEMLNGQKLQGPPTAEEVNYMLKNKGLEDKFPLFTAIHKICTNQLKPKDLIDCIRNHPEHMQTL</sequence>
<comment type="catalytic activity">
    <reaction>
        <text>sn-glycerol 3-phosphate + NAD(+) = dihydroxyacetone phosphate + NADH + H(+)</text>
        <dbReference type="Rhea" id="RHEA:11092"/>
        <dbReference type="ChEBI" id="CHEBI:15378"/>
        <dbReference type="ChEBI" id="CHEBI:57540"/>
        <dbReference type="ChEBI" id="CHEBI:57597"/>
        <dbReference type="ChEBI" id="CHEBI:57642"/>
        <dbReference type="ChEBI" id="CHEBI:57945"/>
        <dbReference type="EC" id="1.1.1.8"/>
    </reaction>
</comment>
<comment type="pathway">
    <text>Phospholipid metabolism; alpha-glycerophosphate cycle.</text>
</comment>
<comment type="subunit">
    <text>Homodimer.</text>
</comment>
<comment type="subcellular location">
    <subcellularLocation>
        <location>Cytoplasm</location>
    </subcellularLocation>
</comment>
<comment type="similarity">
    <text evidence="4">Belongs to the NAD-dependent glycerol-3-phosphate dehydrogenase family.</text>
</comment>
<dbReference type="EC" id="1.1.1.8"/>
<dbReference type="EMBL" id="X59076">
    <property type="protein sequence ID" value="CAA41800.1"/>
    <property type="molecule type" value="mRNA"/>
</dbReference>
<dbReference type="EMBL" id="D10697">
    <property type="protein sequence ID" value="BAA01539.1"/>
    <property type="molecule type" value="Genomic_DNA"/>
</dbReference>
<dbReference type="PIR" id="A60985">
    <property type="entry name" value="A60985"/>
</dbReference>
<dbReference type="PIR" id="B60985">
    <property type="entry name" value="B60985"/>
</dbReference>
<dbReference type="PIR" id="JS0023">
    <property type="entry name" value="JS0023"/>
</dbReference>
<dbReference type="PIR" id="S31790">
    <property type="entry name" value="S31790"/>
</dbReference>
<dbReference type="SMR" id="P07735"/>
<dbReference type="EnsemblMetazoa" id="FBtr0439460">
    <property type="protein sequence ID" value="FBpp0396129"/>
    <property type="gene ID" value="FBgn0013081"/>
</dbReference>
<dbReference type="EnsemblMetazoa" id="XM_015172685.2">
    <property type="protein sequence ID" value="XP_015028171.1"/>
    <property type="gene ID" value="LOC6629022"/>
</dbReference>
<dbReference type="GeneID" id="6629022"/>
<dbReference type="KEGG" id="dvi:6629022"/>
<dbReference type="eggNOG" id="KOG2711">
    <property type="taxonomic scope" value="Eukaryota"/>
</dbReference>
<dbReference type="OrthoDB" id="10263760at2759"/>
<dbReference type="UniPathway" id="UPA00086"/>
<dbReference type="ChiTaRS" id="Gpdh">
    <property type="organism name" value="fly"/>
</dbReference>
<dbReference type="GO" id="GO:0005829">
    <property type="term" value="C:cytosol"/>
    <property type="evidence" value="ECO:0007669"/>
    <property type="project" value="TreeGrafter"/>
</dbReference>
<dbReference type="GO" id="GO:0141152">
    <property type="term" value="F:glycerol-3-phosphate dehydrogenase (NAD+) activity"/>
    <property type="evidence" value="ECO:0007669"/>
    <property type="project" value="UniProtKB-EC"/>
</dbReference>
<dbReference type="GO" id="GO:0051287">
    <property type="term" value="F:NAD binding"/>
    <property type="evidence" value="ECO:0007669"/>
    <property type="project" value="InterPro"/>
</dbReference>
<dbReference type="GO" id="GO:0042803">
    <property type="term" value="F:protein homodimerization activity"/>
    <property type="evidence" value="ECO:0007669"/>
    <property type="project" value="InterPro"/>
</dbReference>
<dbReference type="GO" id="GO:0005975">
    <property type="term" value="P:carbohydrate metabolic process"/>
    <property type="evidence" value="ECO:0007669"/>
    <property type="project" value="InterPro"/>
</dbReference>
<dbReference type="GO" id="GO:0046168">
    <property type="term" value="P:glycerol-3-phosphate catabolic process"/>
    <property type="evidence" value="ECO:0007669"/>
    <property type="project" value="InterPro"/>
</dbReference>
<dbReference type="GO" id="GO:0006650">
    <property type="term" value="P:glycerophospholipid metabolic process"/>
    <property type="evidence" value="ECO:0007669"/>
    <property type="project" value="UniProtKB-UniPathway"/>
</dbReference>
<dbReference type="FunFam" id="1.10.1040.10:FF:000004">
    <property type="entry name" value="Glycerol-3-phosphate dehydrogenase [NAD(+)]"/>
    <property type="match status" value="1"/>
</dbReference>
<dbReference type="FunFam" id="3.40.50.720:FF:000088">
    <property type="entry name" value="Glycerol-3-phosphate dehydrogenase [NAD(+)]"/>
    <property type="match status" value="1"/>
</dbReference>
<dbReference type="Gene3D" id="1.10.1040.10">
    <property type="entry name" value="N-(1-d-carboxylethyl)-l-norvaline Dehydrogenase, domain 2"/>
    <property type="match status" value="1"/>
</dbReference>
<dbReference type="Gene3D" id="3.40.50.720">
    <property type="entry name" value="NAD(P)-binding Rossmann-like Domain"/>
    <property type="match status" value="1"/>
</dbReference>
<dbReference type="InterPro" id="IPR008927">
    <property type="entry name" value="6-PGluconate_DH-like_C_sf"/>
</dbReference>
<dbReference type="InterPro" id="IPR013328">
    <property type="entry name" value="6PGD_dom2"/>
</dbReference>
<dbReference type="InterPro" id="IPR006168">
    <property type="entry name" value="G3P_DH_NAD-dep"/>
</dbReference>
<dbReference type="InterPro" id="IPR006109">
    <property type="entry name" value="G3P_DH_NAD-dep_C"/>
</dbReference>
<dbReference type="InterPro" id="IPR017751">
    <property type="entry name" value="G3P_DH_NAD-dep_euk"/>
</dbReference>
<dbReference type="InterPro" id="IPR011128">
    <property type="entry name" value="G3P_DH_NAD-dep_N"/>
</dbReference>
<dbReference type="InterPro" id="IPR036291">
    <property type="entry name" value="NAD(P)-bd_dom_sf"/>
</dbReference>
<dbReference type="NCBIfam" id="TIGR03376">
    <property type="entry name" value="glycerol3P_DH"/>
    <property type="match status" value="1"/>
</dbReference>
<dbReference type="PANTHER" id="PTHR11728">
    <property type="entry name" value="GLYCEROL-3-PHOSPHATE DEHYDROGENASE"/>
    <property type="match status" value="1"/>
</dbReference>
<dbReference type="PANTHER" id="PTHR11728:SF8">
    <property type="entry name" value="GLYCEROL-3-PHOSPHATE DEHYDROGENASE [NAD(+)]-RELATED"/>
    <property type="match status" value="1"/>
</dbReference>
<dbReference type="Pfam" id="PF07479">
    <property type="entry name" value="NAD_Gly3P_dh_C"/>
    <property type="match status" value="1"/>
</dbReference>
<dbReference type="Pfam" id="PF01210">
    <property type="entry name" value="NAD_Gly3P_dh_N"/>
    <property type="match status" value="1"/>
</dbReference>
<dbReference type="PIRSF" id="PIRSF000114">
    <property type="entry name" value="Glycerol-3-P_dh"/>
    <property type="match status" value="1"/>
</dbReference>
<dbReference type="PRINTS" id="PR00077">
    <property type="entry name" value="GPDHDRGNASE"/>
</dbReference>
<dbReference type="SUPFAM" id="SSF48179">
    <property type="entry name" value="6-phosphogluconate dehydrogenase C-terminal domain-like"/>
    <property type="match status" value="1"/>
</dbReference>
<dbReference type="SUPFAM" id="SSF51735">
    <property type="entry name" value="NAD(P)-binding Rossmann-fold domains"/>
    <property type="match status" value="1"/>
</dbReference>
<dbReference type="PROSITE" id="PS00957">
    <property type="entry name" value="NAD_G3PDH"/>
    <property type="match status" value="1"/>
</dbReference>
<organism>
    <name type="scientific">Drosophila virilis</name>
    <name type="common">Fruit fly</name>
    <dbReference type="NCBI Taxonomy" id="7244"/>
    <lineage>
        <taxon>Eukaryota</taxon>
        <taxon>Metazoa</taxon>
        <taxon>Ecdysozoa</taxon>
        <taxon>Arthropoda</taxon>
        <taxon>Hexapoda</taxon>
        <taxon>Insecta</taxon>
        <taxon>Pterygota</taxon>
        <taxon>Neoptera</taxon>
        <taxon>Endopterygota</taxon>
        <taxon>Diptera</taxon>
        <taxon>Brachycera</taxon>
        <taxon>Muscomorpha</taxon>
        <taxon>Ephydroidea</taxon>
        <taxon>Drosophilidae</taxon>
        <taxon>Drosophila</taxon>
    </lineage>
</organism>